<name>ATPB_BACHK</name>
<organism>
    <name type="scientific">Bacillus thuringiensis subsp. konkukian (strain 97-27)</name>
    <dbReference type="NCBI Taxonomy" id="281309"/>
    <lineage>
        <taxon>Bacteria</taxon>
        <taxon>Bacillati</taxon>
        <taxon>Bacillota</taxon>
        <taxon>Bacilli</taxon>
        <taxon>Bacillales</taxon>
        <taxon>Bacillaceae</taxon>
        <taxon>Bacillus</taxon>
        <taxon>Bacillus cereus group</taxon>
    </lineage>
</organism>
<reference key="1">
    <citation type="journal article" date="2006" name="J. Bacteriol.">
        <title>Pathogenomic sequence analysis of Bacillus cereus and Bacillus thuringiensis isolates closely related to Bacillus anthracis.</title>
        <authorList>
            <person name="Han C.S."/>
            <person name="Xie G."/>
            <person name="Challacombe J.F."/>
            <person name="Altherr M.R."/>
            <person name="Bhotika S.S."/>
            <person name="Bruce D."/>
            <person name="Campbell C.S."/>
            <person name="Campbell M.L."/>
            <person name="Chen J."/>
            <person name="Chertkov O."/>
            <person name="Cleland C."/>
            <person name="Dimitrijevic M."/>
            <person name="Doggett N.A."/>
            <person name="Fawcett J.J."/>
            <person name="Glavina T."/>
            <person name="Goodwin L.A."/>
            <person name="Hill K.K."/>
            <person name="Hitchcock P."/>
            <person name="Jackson P.J."/>
            <person name="Keim P."/>
            <person name="Kewalramani A.R."/>
            <person name="Longmire J."/>
            <person name="Lucas S."/>
            <person name="Malfatti S."/>
            <person name="McMurry K."/>
            <person name="Meincke L.J."/>
            <person name="Misra M."/>
            <person name="Moseman B.L."/>
            <person name="Mundt M."/>
            <person name="Munk A.C."/>
            <person name="Okinaka R.T."/>
            <person name="Parson-Quintana B."/>
            <person name="Reilly L.P."/>
            <person name="Richardson P."/>
            <person name="Robinson D.L."/>
            <person name="Rubin E."/>
            <person name="Saunders E."/>
            <person name="Tapia R."/>
            <person name="Tesmer J.G."/>
            <person name="Thayer N."/>
            <person name="Thompson L.S."/>
            <person name="Tice H."/>
            <person name="Ticknor L.O."/>
            <person name="Wills P.L."/>
            <person name="Brettin T.S."/>
            <person name="Gilna P."/>
        </authorList>
    </citation>
    <scope>NUCLEOTIDE SEQUENCE [LARGE SCALE GENOMIC DNA]</scope>
    <source>
        <strain>97-27</strain>
    </source>
</reference>
<keyword id="KW-0066">ATP synthesis</keyword>
<keyword id="KW-0067">ATP-binding</keyword>
<keyword id="KW-1003">Cell membrane</keyword>
<keyword id="KW-0139">CF(1)</keyword>
<keyword id="KW-0375">Hydrogen ion transport</keyword>
<keyword id="KW-0406">Ion transport</keyword>
<keyword id="KW-0472">Membrane</keyword>
<keyword id="KW-0547">Nucleotide-binding</keyword>
<keyword id="KW-1278">Translocase</keyword>
<keyword id="KW-0813">Transport</keyword>
<evidence type="ECO:0000255" key="1">
    <source>
        <dbReference type="HAMAP-Rule" id="MF_01347"/>
    </source>
</evidence>
<accession>Q6HAY0</accession>
<comment type="function">
    <text evidence="1">Produces ATP from ADP in the presence of a proton gradient across the membrane. The catalytic sites are hosted primarily by the beta subunits.</text>
</comment>
<comment type="catalytic activity">
    <reaction evidence="1">
        <text>ATP + H2O + 4 H(+)(in) = ADP + phosphate + 5 H(+)(out)</text>
        <dbReference type="Rhea" id="RHEA:57720"/>
        <dbReference type="ChEBI" id="CHEBI:15377"/>
        <dbReference type="ChEBI" id="CHEBI:15378"/>
        <dbReference type="ChEBI" id="CHEBI:30616"/>
        <dbReference type="ChEBI" id="CHEBI:43474"/>
        <dbReference type="ChEBI" id="CHEBI:456216"/>
        <dbReference type="EC" id="7.1.2.2"/>
    </reaction>
</comment>
<comment type="subunit">
    <text evidence="1">F-type ATPases have 2 components, CF(1) - the catalytic core - and CF(0) - the membrane proton channel. CF(1) has five subunits: alpha(3), beta(3), gamma(1), delta(1), epsilon(1). CF(0) has three main subunits: a(1), b(2) and c(9-12). The alpha and beta chains form an alternating ring which encloses part of the gamma chain. CF(1) is attached to CF(0) by a central stalk formed by the gamma and epsilon chains, while a peripheral stalk is formed by the delta and b chains.</text>
</comment>
<comment type="subcellular location">
    <subcellularLocation>
        <location evidence="1">Cell membrane</location>
        <topology evidence="1">Peripheral membrane protein</topology>
    </subcellularLocation>
</comment>
<comment type="similarity">
    <text evidence="1">Belongs to the ATPase alpha/beta chains family.</text>
</comment>
<protein>
    <recommendedName>
        <fullName evidence="1">ATP synthase subunit beta</fullName>
        <ecNumber evidence="1">7.1.2.2</ecNumber>
    </recommendedName>
    <alternativeName>
        <fullName evidence="1">ATP synthase F1 sector subunit beta</fullName>
    </alternativeName>
    <alternativeName>
        <fullName evidence="1">F-ATPase subunit beta</fullName>
    </alternativeName>
</protein>
<sequence>MNKGRVTQIMGPVVDVKFDGGKLPEIYNALTVKQSNENGTSINLTFEVALHLGDDTVRTVAMSSTDGLVRGTEVEDTGKAISVPVGDATLGRVFNVLGDAIDLDGEVPADVRRDPIHRQAPAFEELSTKVEILETGIKVVDLLAPYIKGGKIGLFGGAGVGKTVLIQELINNIAQEHGGISVFAGVGERTREGNDLYHEMSDSGVIKKTAMVFGQMNEPPGARQRVALTGLTMAEHFRDEQGQDVLLFIDNIFRFTQAGSEVSALLGRMPSAVGYQPTLATEMGQLQERITSTNKGSITSIQAVYVPADDYTDPAPATTFAHLDATTNLERRLTQMGIYPAVDPLASTSRALSPEIVGEEHYEVARQVQQTLQRYKELQDIIAILGMDELSEEDKLVVHRARRIQFFLSQNFHVAEQFTGQKGSYVPVKETVRGFKEILEGKYDDLPEDAFRLVGGIEEVIENAKKMMA</sequence>
<dbReference type="EC" id="7.1.2.2" evidence="1"/>
<dbReference type="EMBL" id="AE017355">
    <property type="protein sequence ID" value="AAT63343.1"/>
    <property type="molecule type" value="Genomic_DNA"/>
</dbReference>
<dbReference type="RefSeq" id="WP_001032600.1">
    <property type="nucleotide sequence ID" value="NC_005957.1"/>
</dbReference>
<dbReference type="RefSeq" id="YP_039296.1">
    <property type="nucleotide sequence ID" value="NC_005957.1"/>
</dbReference>
<dbReference type="SMR" id="Q6HAY0"/>
<dbReference type="GeneID" id="45025135"/>
<dbReference type="KEGG" id="btk:BT9727_4987"/>
<dbReference type="PATRIC" id="fig|281309.8.peg.5304"/>
<dbReference type="HOGENOM" id="CLU_022398_0_2_9"/>
<dbReference type="Proteomes" id="UP000001301">
    <property type="component" value="Chromosome"/>
</dbReference>
<dbReference type="GO" id="GO:0005886">
    <property type="term" value="C:plasma membrane"/>
    <property type="evidence" value="ECO:0007669"/>
    <property type="project" value="UniProtKB-SubCell"/>
</dbReference>
<dbReference type="GO" id="GO:0045259">
    <property type="term" value="C:proton-transporting ATP synthase complex"/>
    <property type="evidence" value="ECO:0007669"/>
    <property type="project" value="UniProtKB-KW"/>
</dbReference>
<dbReference type="GO" id="GO:0005524">
    <property type="term" value="F:ATP binding"/>
    <property type="evidence" value="ECO:0007669"/>
    <property type="project" value="UniProtKB-UniRule"/>
</dbReference>
<dbReference type="GO" id="GO:0016887">
    <property type="term" value="F:ATP hydrolysis activity"/>
    <property type="evidence" value="ECO:0007669"/>
    <property type="project" value="InterPro"/>
</dbReference>
<dbReference type="GO" id="GO:0046933">
    <property type="term" value="F:proton-transporting ATP synthase activity, rotational mechanism"/>
    <property type="evidence" value="ECO:0007669"/>
    <property type="project" value="UniProtKB-UniRule"/>
</dbReference>
<dbReference type="CDD" id="cd18110">
    <property type="entry name" value="ATP-synt_F1_beta_C"/>
    <property type="match status" value="1"/>
</dbReference>
<dbReference type="CDD" id="cd18115">
    <property type="entry name" value="ATP-synt_F1_beta_N"/>
    <property type="match status" value="1"/>
</dbReference>
<dbReference type="CDD" id="cd01133">
    <property type="entry name" value="F1-ATPase_beta_CD"/>
    <property type="match status" value="1"/>
</dbReference>
<dbReference type="FunFam" id="1.10.1140.10:FF:000001">
    <property type="entry name" value="ATP synthase subunit beta"/>
    <property type="match status" value="1"/>
</dbReference>
<dbReference type="FunFam" id="2.40.10.170:FF:000005">
    <property type="entry name" value="ATP synthase subunit beta"/>
    <property type="match status" value="1"/>
</dbReference>
<dbReference type="FunFam" id="3.40.50.300:FF:000004">
    <property type="entry name" value="ATP synthase subunit beta"/>
    <property type="match status" value="1"/>
</dbReference>
<dbReference type="Gene3D" id="2.40.10.170">
    <property type="match status" value="1"/>
</dbReference>
<dbReference type="Gene3D" id="1.10.1140.10">
    <property type="entry name" value="Bovine Mitochondrial F1-atpase, Atp Synthase Beta Chain, Chain D, domain 3"/>
    <property type="match status" value="1"/>
</dbReference>
<dbReference type="Gene3D" id="3.40.50.300">
    <property type="entry name" value="P-loop containing nucleotide triphosphate hydrolases"/>
    <property type="match status" value="1"/>
</dbReference>
<dbReference type="HAMAP" id="MF_01347">
    <property type="entry name" value="ATP_synth_beta_bact"/>
    <property type="match status" value="1"/>
</dbReference>
<dbReference type="InterPro" id="IPR003593">
    <property type="entry name" value="AAA+_ATPase"/>
</dbReference>
<dbReference type="InterPro" id="IPR055190">
    <property type="entry name" value="ATP-synt_VA_C"/>
</dbReference>
<dbReference type="InterPro" id="IPR005722">
    <property type="entry name" value="ATP_synth_F1_bsu"/>
</dbReference>
<dbReference type="InterPro" id="IPR020003">
    <property type="entry name" value="ATPase_a/bsu_AS"/>
</dbReference>
<dbReference type="InterPro" id="IPR050053">
    <property type="entry name" value="ATPase_alpha/beta_chains"/>
</dbReference>
<dbReference type="InterPro" id="IPR004100">
    <property type="entry name" value="ATPase_F1/V1/A1_a/bsu_N"/>
</dbReference>
<dbReference type="InterPro" id="IPR036121">
    <property type="entry name" value="ATPase_F1/V1/A1_a/bsu_N_sf"/>
</dbReference>
<dbReference type="InterPro" id="IPR000194">
    <property type="entry name" value="ATPase_F1/V1/A1_a/bsu_nucl-bd"/>
</dbReference>
<dbReference type="InterPro" id="IPR024034">
    <property type="entry name" value="ATPase_F1/V1_b/a_C"/>
</dbReference>
<dbReference type="InterPro" id="IPR027417">
    <property type="entry name" value="P-loop_NTPase"/>
</dbReference>
<dbReference type="NCBIfam" id="TIGR01039">
    <property type="entry name" value="atpD"/>
    <property type="match status" value="1"/>
</dbReference>
<dbReference type="PANTHER" id="PTHR15184">
    <property type="entry name" value="ATP SYNTHASE"/>
    <property type="match status" value="1"/>
</dbReference>
<dbReference type="PANTHER" id="PTHR15184:SF71">
    <property type="entry name" value="ATP SYNTHASE SUBUNIT BETA, MITOCHONDRIAL"/>
    <property type="match status" value="1"/>
</dbReference>
<dbReference type="Pfam" id="PF00006">
    <property type="entry name" value="ATP-synt_ab"/>
    <property type="match status" value="1"/>
</dbReference>
<dbReference type="Pfam" id="PF02874">
    <property type="entry name" value="ATP-synt_ab_N"/>
    <property type="match status" value="1"/>
</dbReference>
<dbReference type="Pfam" id="PF22919">
    <property type="entry name" value="ATP-synt_VA_C"/>
    <property type="match status" value="1"/>
</dbReference>
<dbReference type="SMART" id="SM00382">
    <property type="entry name" value="AAA"/>
    <property type="match status" value="1"/>
</dbReference>
<dbReference type="SUPFAM" id="SSF47917">
    <property type="entry name" value="C-terminal domain of alpha and beta subunits of F1 ATP synthase"/>
    <property type="match status" value="1"/>
</dbReference>
<dbReference type="SUPFAM" id="SSF50615">
    <property type="entry name" value="N-terminal domain of alpha and beta subunits of F1 ATP synthase"/>
    <property type="match status" value="1"/>
</dbReference>
<dbReference type="SUPFAM" id="SSF52540">
    <property type="entry name" value="P-loop containing nucleoside triphosphate hydrolases"/>
    <property type="match status" value="1"/>
</dbReference>
<dbReference type="PROSITE" id="PS00152">
    <property type="entry name" value="ATPASE_ALPHA_BETA"/>
    <property type="match status" value="1"/>
</dbReference>
<feature type="chain" id="PRO_0000254211" description="ATP synthase subunit beta">
    <location>
        <begin position="1"/>
        <end position="469"/>
    </location>
</feature>
<feature type="binding site" evidence="1">
    <location>
        <begin position="156"/>
        <end position="163"/>
    </location>
    <ligand>
        <name>ATP</name>
        <dbReference type="ChEBI" id="CHEBI:30616"/>
    </ligand>
</feature>
<gene>
    <name evidence="1" type="primary">atpD</name>
    <name type="ordered locus">BT9727_4987</name>
</gene>
<proteinExistence type="inferred from homology"/>